<proteinExistence type="inferred from homology"/>
<evidence type="ECO:0000250" key="1"/>
<evidence type="ECO:0000255" key="2"/>
<evidence type="ECO:0000305" key="3"/>
<gene>
    <name type="primary">norB</name>
    <name type="ordered locus">USA300HOU_1373</name>
</gene>
<dbReference type="EMBL" id="CP000730">
    <property type="protein sequence ID" value="ABX29383.1"/>
    <property type="molecule type" value="Genomic_DNA"/>
</dbReference>
<dbReference type="RefSeq" id="WP_000414685.1">
    <property type="nucleotide sequence ID" value="NC_010079.1"/>
</dbReference>
<dbReference type="SMR" id="A8Z415"/>
<dbReference type="KEGG" id="sax:USA300HOU_1373"/>
<dbReference type="HOGENOM" id="CLU_000960_28_3_9"/>
<dbReference type="GO" id="GO:0005886">
    <property type="term" value="C:plasma membrane"/>
    <property type="evidence" value="ECO:0007669"/>
    <property type="project" value="UniProtKB-SubCell"/>
</dbReference>
<dbReference type="GO" id="GO:0022857">
    <property type="term" value="F:transmembrane transporter activity"/>
    <property type="evidence" value="ECO:0007669"/>
    <property type="project" value="InterPro"/>
</dbReference>
<dbReference type="GO" id="GO:0046677">
    <property type="term" value="P:response to antibiotic"/>
    <property type="evidence" value="ECO:0007669"/>
    <property type="project" value="UniProtKB-KW"/>
</dbReference>
<dbReference type="CDD" id="cd17321">
    <property type="entry name" value="MFS_MMR_MDR_like"/>
    <property type="match status" value="1"/>
</dbReference>
<dbReference type="FunFam" id="1.20.1250.20:FF:000252">
    <property type="entry name" value="Quinolone resistance protein NorB"/>
    <property type="match status" value="1"/>
</dbReference>
<dbReference type="FunFam" id="1.20.1720.10:FF:000015">
    <property type="entry name" value="Quinolone resistance protein NorB"/>
    <property type="match status" value="1"/>
</dbReference>
<dbReference type="Gene3D" id="1.20.1250.20">
    <property type="entry name" value="MFS general substrate transporter like domains"/>
    <property type="match status" value="1"/>
</dbReference>
<dbReference type="Gene3D" id="1.20.1720.10">
    <property type="entry name" value="Multidrug resistance protein D"/>
    <property type="match status" value="1"/>
</dbReference>
<dbReference type="InterPro" id="IPR011701">
    <property type="entry name" value="MFS"/>
</dbReference>
<dbReference type="InterPro" id="IPR020846">
    <property type="entry name" value="MFS_dom"/>
</dbReference>
<dbReference type="InterPro" id="IPR036259">
    <property type="entry name" value="MFS_trans_sf"/>
</dbReference>
<dbReference type="PANTHER" id="PTHR42718">
    <property type="entry name" value="MAJOR FACILITATOR SUPERFAMILY MULTIDRUG TRANSPORTER MFSC"/>
    <property type="match status" value="1"/>
</dbReference>
<dbReference type="PANTHER" id="PTHR42718:SF9">
    <property type="entry name" value="MAJOR FACILITATOR SUPERFAMILY MULTIDRUG TRANSPORTER MFSC"/>
    <property type="match status" value="1"/>
</dbReference>
<dbReference type="Pfam" id="PF07690">
    <property type="entry name" value="MFS_1"/>
    <property type="match status" value="1"/>
</dbReference>
<dbReference type="SUPFAM" id="SSF103473">
    <property type="entry name" value="MFS general substrate transporter"/>
    <property type="match status" value="1"/>
</dbReference>
<dbReference type="PROSITE" id="PS50850">
    <property type="entry name" value="MFS"/>
    <property type="match status" value="1"/>
</dbReference>
<sequence>MEKPSREAFEGNNKLLIGIVLSVITFWLFAQSLVNVVPILEDSFNTDIGTVNIAVSITALFSGMFVVGAGGLADKYGRIKLTNIGIILNILGSLLIIISNIPLLLIIGRLIQGLSAACIMPATLSIIKSYYIGKDRQRALSYWSIGSWGGSGVCSFFGGAVATLLGWRWIFILSIIISLIALFLIKGTPETKSKSISLNKFDIKGLVLLVIMLLSLNILITKGSELGVTSLLFITLLAIAIGSFSLFIVLEKRATNPLIDFKLFKNKAYTGATASNFLLNGVAGTLIVANTFVQRGLGYSSLQAGSLSITYLVMVLIMIRVGEKLLQTLGCKKPMLIGTGVLIVGECLISLTFLPEIFYVICCIIGYLFFGLGLGIYATPSTDTAIANAPLEKVGVAAGIYKMASALGGAFGVALSGAVYAIVSNMTNIYTGAMIALWLNAGMGILSFVIILLLVPKQNDTQL</sequence>
<feature type="chain" id="PRO_0000361966" description="Quinolone resistance protein NorB">
    <location>
        <begin position="1"/>
        <end position="463"/>
    </location>
</feature>
<feature type="transmembrane region" description="Helical" evidence="2">
    <location>
        <begin position="17"/>
        <end position="37"/>
    </location>
</feature>
<feature type="transmembrane region" description="Helical" evidence="2">
    <location>
        <begin position="53"/>
        <end position="73"/>
    </location>
</feature>
<feature type="transmembrane region" description="Helical" evidence="2">
    <location>
        <begin position="86"/>
        <end position="106"/>
    </location>
</feature>
<feature type="transmembrane region" description="Helical" evidence="2">
    <location>
        <begin position="107"/>
        <end position="127"/>
    </location>
</feature>
<feature type="transmembrane region" description="Helical" evidence="2">
    <location>
        <begin position="142"/>
        <end position="162"/>
    </location>
</feature>
<feature type="transmembrane region" description="Helical" evidence="2">
    <location>
        <begin position="165"/>
        <end position="185"/>
    </location>
</feature>
<feature type="transmembrane region" description="Helical" evidence="2">
    <location>
        <begin position="201"/>
        <end position="221"/>
    </location>
</feature>
<feature type="transmembrane region" description="Helical" evidence="2">
    <location>
        <begin position="230"/>
        <end position="250"/>
    </location>
</feature>
<feature type="transmembrane region" description="Helical" evidence="2">
    <location>
        <begin position="273"/>
        <end position="293"/>
    </location>
</feature>
<feature type="transmembrane region" description="Helical" evidence="2">
    <location>
        <begin position="299"/>
        <end position="319"/>
    </location>
</feature>
<feature type="transmembrane region" description="Helical" evidence="2">
    <location>
        <begin position="334"/>
        <end position="354"/>
    </location>
</feature>
<feature type="transmembrane region" description="Helical" evidence="2">
    <location>
        <begin position="357"/>
        <end position="377"/>
    </location>
</feature>
<feature type="transmembrane region" description="Helical" evidence="2">
    <location>
        <begin position="403"/>
        <end position="423"/>
    </location>
</feature>
<feature type="transmembrane region" description="Helical" evidence="2">
    <location>
        <begin position="435"/>
        <end position="455"/>
    </location>
</feature>
<comment type="function">
    <text evidence="1">Multidrug efflux pump that acts independently of NorA and is one of the factors that confers resistance against diverse quinolones and chemical compounds.</text>
</comment>
<comment type="subcellular location">
    <subcellularLocation>
        <location evidence="3">Cell membrane</location>
        <topology evidence="3">Multi-pass membrane protein</topology>
    </subcellularLocation>
</comment>
<comment type="similarity">
    <text evidence="3">Belongs to the major facilitator superfamily. TCR/Tet family.</text>
</comment>
<reference key="1">
    <citation type="journal article" date="2007" name="BMC Microbiol.">
        <title>Subtle genetic changes enhance virulence of methicillin resistant and sensitive Staphylococcus aureus.</title>
        <authorList>
            <person name="Highlander S.K."/>
            <person name="Hulten K.G."/>
            <person name="Qin X."/>
            <person name="Jiang H."/>
            <person name="Yerrapragada S."/>
            <person name="Mason E.O. Jr."/>
            <person name="Shang Y."/>
            <person name="Williams T.M."/>
            <person name="Fortunov R.M."/>
            <person name="Liu Y."/>
            <person name="Igboeli O."/>
            <person name="Petrosino J."/>
            <person name="Tirumalai M."/>
            <person name="Uzman A."/>
            <person name="Fox G.E."/>
            <person name="Cardenas A.M."/>
            <person name="Muzny D.M."/>
            <person name="Hemphill L."/>
            <person name="Ding Y."/>
            <person name="Dugan S."/>
            <person name="Blyth P.R."/>
            <person name="Buhay C.J."/>
            <person name="Dinh H.H."/>
            <person name="Hawes A.C."/>
            <person name="Holder M."/>
            <person name="Kovar C.L."/>
            <person name="Lee S.L."/>
            <person name="Liu W."/>
            <person name="Nazareth L.V."/>
            <person name="Wang Q."/>
            <person name="Zhou J."/>
            <person name="Kaplan S.L."/>
            <person name="Weinstock G.M."/>
        </authorList>
    </citation>
    <scope>NUCLEOTIDE SEQUENCE [LARGE SCALE GENOMIC DNA]</scope>
    <source>
        <strain>USA300 / TCH1516</strain>
    </source>
</reference>
<accession>A8Z415</accession>
<protein>
    <recommendedName>
        <fullName>Quinolone resistance protein NorB</fullName>
    </recommendedName>
</protein>
<organism>
    <name type="scientific">Staphylococcus aureus (strain USA300 / TCH1516)</name>
    <dbReference type="NCBI Taxonomy" id="451516"/>
    <lineage>
        <taxon>Bacteria</taxon>
        <taxon>Bacillati</taxon>
        <taxon>Bacillota</taxon>
        <taxon>Bacilli</taxon>
        <taxon>Bacillales</taxon>
        <taxon>Staphylococcaceae</taxon>
        <taxon>Staphylococcus</taxon>
    </lineage>
</organism>
<keyword id="KW-0046">Antibiotic resistance</keyword>
<keyword id="KW-1003">Cell membrane</keyword>
<keyword id="KW-0472">Membrane</keyword>
<keyword id="KW-0812">Transmembrane</keyword>
<keyword id="KW-1133">Transmembrane helix</keyword>
<keyword id="KW-0813">Transport</keyword>
<name>NORB_STAAT</name>